<reference key="1">
    <citation type="journal article" date="2007" name="PLoS ONE">
        <title>Molecular correlates of host specialization in Staphylococcus aureus.</title>
        <authorList>
            <person name="Herron-Olson L."/>
            <person name="Fitzgerald J.R."/>
            <person name="Musser J.M."/>
            <person name="Kapur V."/>
        </authorList>
    </citation>
    <scope>NUCLEOTIDE SEQUENCE [LARGE SCALE GENOMIC DNA]</scope>
    <source>
        <strain>bovine RF122 / ET3-1</strain>
    </source>
</reference>
<comment type="function">
    <text evidence="1">Condenses 4-methyl-5-(beta-hydroxyethyl)thiazole monophosphate (THZ-P) and 2-methyl-4-amino-5-hydroxymethyl pyrimidine pyrophosphate (HMP-PP) to form thiamine monophosphate (TMP).</text>
</comment>
<comment type="catalytic activity">
    <reaction evidence="1">
        <text>2-[(2R,5Z)-2-carboxy-4-methylthiazol-5(2H)-ylidene]ethyl phosphate + 4-amino-2-methyl-5-(diphosphooxymethyl)pyrimidine + 2 H(+) = thiamine phosphate + CO2 + diphosphate</text>
        <dbReference type="Rhea" id="RHEA:47844"/>
        <dbReference type="ChEBI" id="CHEBI:15378"/>
        <dbReference type="ChEBI" id="CHEBI:16526"/>
        <dbReference type="ChEBI" id="CHEBI:33019"/>
        <dbReference type="ChEBI" id="CHEBI:37575"/>
        <dbReference type="ChEBI" id="CHEBI:57841"/>
        <dbReference type="ChEBI" id="CHEBI:62899"/>
        <dbReference type="EC" id="2.5.1.3"/>
    </reaction>
</comment>
<comment type="catalytic activity">
    <reaction evidence="1">
        <text>2-(2-carboxy-4-methylthiazol-5-yl)ethyl phosphate + 4-amino-2-methyl-5-(diphosphooxymethyl)pyrimidine + 2 H(+) = thiamine phosphate + CO2 + diphosphate</text>
        <dbReference type="Rhea" id="RHEA:47848"/>
        <dbReference type="ChEBI" id="CHEBI:15378"/>
        <dbReference type="ChEBI" id="CHEBI:16526"/>
        <dbReference type="ChEBI" id="CHEBI:33019"/>
        <dbReference type="ChEBI" id="CHEBI:37575"/>
        <dbReference type="ChEBI" id="CHEBI:57841"/>
        <dbReference type="ChEBI" id="CHEBI:62890"/>
        <dbReference type="EC" id="2.5.1.3"/>
    </reaction>
</comment>
<comment type="catalytic activity">
    <reaction evidence="1">
        <text>4-methyl-5-(2-phosphooxyethyl)-thiazole + 4-amino-2-methyl-5-(diphosphooxymethyl)pyrimidine + H(+) = thiamine phosphate + diphosphate</text>
        <dbReference type="Rhea" id="RHEA:22328"/>
        <dbReference type="ChEBI" id="CHEBI:15378"/>
        <dbReference type="ChEBI" id="CHEBI:33019"/>
        <dbReference type="ChEBI" id="CHEBI:37575"/>
        <dbReference type="ChEBI" id="CHEBI:57841"/>
        <dbReference type="ChEBI" id="CHEBI:58296"/>
        <dbReference type="EC" id="2.5.1.3"/>
    </reaction>
</comment>
<comment type="cofactor">
    <cofactor evidence="1">
        <name>Mg(2+)</name>
        <dbReference type="ChEBI" id="CHEBI:18420"/>
    </cofactor>
    <text evidence="1">Binds 1 Mg(2+) ion per subunit.</text>
</comment>
<comment type="pathway">
    <text evidence="1">Cofactor biosynthesis; thiamine diphosphate biosynthesis; thiamine phosphate from 4-amino-2-methyl-5-diphosphomethylpyrimidine and 4-methyl-5-(2-phosphoethyl)-thiazole: step 1/1.</text>
</comment>
<comment type="similarity">
    <text evidence="1">Belongs to the thiamine-phosphate synthase family.</text>
</comment>
<sequence>MFNQSYLNVYFICGTSNVPSHRTIHEVLEAALKAGITLFQFREKGESALKGNDKLVLAKELQHLCHQYNVPFIVNDDVSLAKEINADGIHVGQDDAKVKEIAQYFTDKIIGLSISDLGEYAKSDLTHVDYIGVGPIYPTPSKHDAHTPVGPEMIATFKEMNPQLPIVAIGGINTSNVAPIVEAGANGISVISAISKSENIEKTVNRFKDFFNN</sequence>
<organism>
    <name type="scientific">Staphylococcus aureus (strain bovine RF122 / ET3-1)</name>
    <dbReference type="NCBI Taxonomy" id="273036"/>
    <lineage>
        <taxon>Bacteria</taxon>
        <taxon>Bacillati</taxon>
        <taxon>Bacillota</taxon>
        <taxon>Bacilli</taxon>
        <taxon>Bacillales</taxon>
        <taxon>Staphylococcaceae</taxon>
        <taxon>Staphylococcus</taxon>
    </lineage>
</organism>
<accession>Q2YUL2</accession>
<protein>
    <recommendedName>
        <fullName evidence="1">Thiamine-phosphate synthase</fullName>
        <shortName evidence="1">TP synthase</shortName>
        <shortName evidence="1">TPS</shortName>
        <ecNumber evidence="1">2.5.1.3</ecNumber>
    </recommendedName>
    <alternativeName>
        <fullName evidence="1">Thiamine-phosphate pyrophosphorylase</fullName>
        <shortName evidence="1">TMP pyrophosphorylase</shortName>
        <shortName evidence="1">TMP-PPase</shortName>
    </alternativeName>
</protein>
<keyword id="KW-0460">Magnesium</keyword>
<keyword id="KW-0479">Metal-binding</keyword>
<keyword id="KW-0784">Thiamine biosynthesis</keyword>
<keyword id="KW-0808">Transferase</keyword>
<proteinExistence type="inferred from homology"/>
<feature type="chain" id="PRO_1000008177" description="Thiamine-phosphate synthase">
    <location>
        <begin position="1"/>
        <end position="213"/>
    </location>
</feature>
<feature type="binding site" evidence="1">
    <location>
        <begin position="40"/>
        <end position="44"/>
    </location>
    <ligand>
        <name>4-amino-2-methyl-5-(diphosphooxymethyl)pyrimidine</name>
        <dbReference type="ChEBI" id="CHEBI:57841"/>
    </ligand>
</feature>
<feature type="binding site" evidence="1">
    <location>
        <position position="75"/>
    </location>
    <ligand>
        <name>4-amino-2-methyl-5-(diphosphooxymethyl)pyrimidine</name>
        <dbReference type="ChEBI" id="CHEBI:57841"/>
    </ligand>
</feature>
<feature type="binding site" evidence="1">
    <location>
        <position position="76"/>
    </location>
    <ligand>
        <name>Mg(2+)</name>
        <dbReference type="ChEBI" id="CHEBI:18420"/>
    </ligand>
</feature>
<feature type="binding site" evidence="1">
    <location>
        <position position="95"/>
    </location>
    <ligand>
        <name>Mg(2+)</name>
        <dbReference type="ChEBI" id="CHEBI:18420"/>
    </ligand>
</feature>
<feature type="binding site" evidence="1">
    <location>
        <position position="113"/>
    </location>
    <ligand>
        <name>4-amino-2-methyl-5-(diphosphooxymethyl)pyrimidine</name>
        <dbReference type="ChEBI" id="CHEBI:57841"/>
    </ligand>
</feature>
<feature type="binding site" evidence="1">
    <location>
        <begin position="139"/>
        <end position="141"/>
    </location>
    <ligand>
        <name>2-[(2R,5Z)-2-carboxy-4-methylthiazol-5(2H)-ylidene]ethyl phosphate</name>
        <dbReference type="ChEBI" id="CHEBI:62899"/>
    </ligand>
</feature>
<feature type="binding site" evidence="1">
    <location>
        <position position="142"/>
    </location>
    <ligand>
        <name>4-amino-2-methyl-5-(diphosphooxymethyl)pyrimidine</name>
        <dbReference type="ChEBI" id="CHEBI:57841"/>
    </ligand>
</feature>
<feature type="binding site" evidence="1">
    <location>
        <position position="171"/>
    </location>
    <ligand>
        <name>2-[(2R,5Z)-2-carboxy-4-methylthiazol-5(2H)-ylidene]ethyl phosphate</name>
        <dbReference type="ChEBI" id="CHEBI:62899"/>
    </ligand>
</feature>
<feature type="binding site" evidence="1">
    <location>
        <begin position="191"/>
        <end position="192"/>
    </location>
    <ligand>
        <name>2-[(2R,5Z)-2-carboxy-4-methylthiazol-5(2H)-ylidene]ethyl phosphate</name>
        <dbReference type="ChEBI" id="CHEBI:62899"/>
    </ligand>
</feature>
<gene>
    <name evidence="1" type="primary">thiE</name>
    <name type="ordered locus">SAB1975c</name>
</gene>
<name>THIE_STAAB</name>
<dbReference type="EC" id="2.5.1.3" evidence="1"/>
<dbReference type="EMBL" id="AJ938182">
    <property type="protein sequence ID" value="CAI81664.1"/>
    <property type="molecule type" value="Genomic_DNA"/>
</dbReference>
<dbReference type="RefSeq" id="WP_000483166.1">
    <property type="nucleotide sequence ID" value="NC_007622.1"/>
</dbReference>
<dbReference type="SMR" id="Q2YUL2"/>
<dbReference type="KEGG" id="sab:SAB1975c"/>
<dbReference type="HOGENOM" id="CLU_018272_3_2_9"/>
<dbReference type="UniPathway" id="UPA00060">
    <property type="reaction ID" value="UER00141"/>
</dbReference>
<dbReference type="GO" id="GO:0005737">
    <property type="term" value="C:cytoplasm"/>
    <property type="evidence" value="ECO:0007669"/>
    <property type="project" value="TreeGrafter"/>
</dbReference>
<dbReference type="GO" id="GO:0000287">
    <property type="term" value="F:magnesium ion binding"/>
    <property type="evidence" value="ECO:0007669"/>
    <property type="project" value="UniProtKB-UniRule"/>
</dbReference>
<dbReference type="GO" id="GO:0004789">
    <property type="term" value="F:thiamine-phosphate diphosphorylase activity"/>
    <property type="evidence" value="ECO:0007669"/>
    <property type="project" value="UniProtKB-UniRule"/>
</dbReference>
<dbReference type="GO" id="GO:0009228">
    <property type="term" value="P:thiamine biosynthetic process"/>
    <property type="evidence" value="ECO:0007669"/>
    <property type="project" value="UniProtKB-KW"/>
</dbReference>
<dbReference type="GO" id="GO:0009229">
    <property type="term" value="P:thiamine diphosphate biosynthetic process"/>
    <property type="evidence" value="ECO:0007669"/>
    <property type="project" value="UniProtKB-UniRule"/>
</dbReference>
<dbReference type="CDD" id="cd00564">
    <property type="entry name" value="TMP_TenI"/>
    <property type="match status" value="1"/>
</dbReference>
<dbReference type="FunFam" id="3.20.20.70:FF:000096">
    <property type="entry name" value="Thiamine-phosphate synthase"/>
    <property type="match status" value="1"/>
</dbReference>
<dbReference type="Gene3D" id="3.20.20.70">
    <property type="entry name" value="Aldolase class I"/>
    <property type="match status" value="1"/>
</dbReference>
<dbReference type="HAMAP" id="MF_00097">
    <property type="entry name" value="TMP_synthase"/>
    <property type="match status" value="1"/>
</dbReference>
<dbReference type="InterPro" id="IPR013785">
    <property type="entry name" value="Aldolase_TIM"/>
</dbReference>
<dbReference type="InterPro" id="IPR036206">
    <property type="entry name" value="ThiamineP_synth_sf"/>
</dbReference>
<dbReference type="InterPro" id="IPR022998">
    <property type="entry name" value="ThiamineP_synth_TenI"/>
</dbReference>
<dbReference type="InterPro" id="IPR034291">
    <property type="entry name" value="TMP_synthase"/>
</dbReference>
<dbReference type="NCBIfam" id="TIGR00693">
    <property type="entry name" value="thiE"/>
    <property type="match status" value="1"/>
</dbReference>
<dbReference type="PANTHER" id="PTHR20857">
    <property type="entry name" value="THIAMINE-PHOSPHATE PYROPHOSPHORYLASE"/>
    <property type="match status" value="1"/>
</dbReference>
<dbReference type="PANTHER" id="PTHR20857:SF15">
    <property type="entry name" value="THIAMINE-PHOSPHATE SYNTHASE"/>
    <property type="match status" value="1"/>
</dbReference>
<dbReference type="Pfam" id="PF02581">
    <property type="entry name" value="TMP-TENI"/>
    <property type="match status" value="1"/>
</dbReference>
<dbReference type="SUPFAM" id="SSF51391">
    <property type="entry name" value="Thiamin phosphate synthase"/>
    <property type="match status" value="1"/>
</dbReference>
<evidence type="ECO:0000255" key="1">
    <source>
        <dbReference type="HAMAP-Rule" id="MF_00097"/>
    </source>
</evidence>